<accession>Q7M3M6</accession>
<organism>
    <name type="scientific">Drosophila virilis</name>
    <name type="common">Fruit fly</name>
    <dbReference type="NCBI Taxonomy" id="7244"/>
    <lineage>
        <taxon>Eukaryota</taxon>
        <taxon>Metazoa</taxon>
        <taxon>Ecdysozoa</taxon>
        <taxon>Arthropoda</taxon>
        <taxon>Hexapoda</taxon>
        <taxon>Insecta</taxon>
        <taxon>Pterygota</taxon>
        <taxon>Neoptera</taxon>
        <taxon>Endopterygota</taxon>
        <taxon>Diptera</taxon>
        <taxon>Brachycera</taxon>
        <taxon>Muscomorpha</taxon>
        <taxon>Ephydroidea</taxon>
        <taxon>Drosophilidae</taxon>
        <taxon>Drosophila</taxon>
    </lineage>
</organism>
<evidence type="ECO:0000250" key="1"/>
<evidence type="ECO:0000255" key="2"/>
<evidence type="ECO:0000255" key="3">
    <source>
        <dbReference type="PROSITE-ProRule" id="PRU00237"/>
    </source>
</evidence>
<evidence type="ECO:0000256" key="4">
    <source>
        <dbReference type="SAM" id="MobiDB-lite"/>
    </source>
</evidence>
<evidence type="ECO:0000269" key="5">
    <source>
    </source>
</evidence>
<evidence type="ECO:0000305" key="6"/>
<comment type="function">
    <text evidence="1">Probably acts as a transcription factor during metamorphosis.</text>
</comment>
<comment type="subcellular location">
    <subcellularLocation>
        <location evidence="3">Nucleus</location>
    </subcellularLocation>
</comment>
<comment type="induction">
    <text evidence="5">The expression of this protein is developmentally regulated and is correlated with the 20-OH-ecdysone induced activity of puff 74EF.</text>
</comment>
<comment type="similarity">
    <text evidence="6">Belongs to the ETS family.</text>
</comment>
<proteinExistence type="evidence at transcript level"/>
<dbReference type="PIR" id="B53225">
    <property type="entry name" value="B53225"/>
</dbReference>
<dbReference type="SMR" id="Q7M3M6"/>
<dbReference type="eggNOG" id="KOG3804">
    <property type="taxonomic scope" value="Eukaryota"/>
</dbReference>
<dbReference type="OrthoDB" id="8196042at2759"/>
<dbReference type="ChiTaRS" id="Eip74EF">
    <property type="organism name" value="fly"/>
</dbReference>
<dbReference type="GO" id="GO:0005634">
    <property type="term" value="C:nucleus"/>
    <property type="evidence" value="ECO:0007669"/>
    <property type="project" value="UniProtKB-SubCell"/>
</dbReference>
<dbReference type="GO" id="GO:0000981">
    <property type="term" value="F:DNA-binding transcription factor activity, RNA polymerase II-specific"/>
    <property type="evidence" value="ECO:0007669"/>
    <property type="project" value="TreeGrafter"/>
</dbReference>
<dbReference type="GO" id="GO:0043565">
    <property type="term" value="F:sequence-specific DNA binding"/>
    <property type="evidence" value="ECO:0007669"/>
    <property type="project" value="InterPro"/>
</dbReference>
<dbReference type="GO" id="GO:0030154">
    <property type="term" value="P:cell differentiation"/>
    <property type="evidence" value="ECO:0007669"/>
    <property type="project" value="TreeGrafter"/>
</dbReference>
<dbReference type="FunFam" id="1.10.10.10:FF:000411">
    <property type="entry name" value="Ecdysone-induced protein 74EF isoform A"/>
    <property type="match status" value="1"/>
</dbReference>
<dbReference type="Gene3D" id="1.10.10.10">
    <property type="entry name" value="Winged helix-like DNA-binding domain superfamily/Winged helix DNA-binding domain"/>
    <property type="match status" value="1"/>
</dbReference>
<dbReference type="InterPro" id="IPR000418">
    <property type="entry name" value="Ets_dom"/>
</dbReference>
<dbReference type="InterPro" id="IPR046328">
    <property type="entry name" value="ETS_fam"/>
</dbReference>
<dbReference type="InterPro" id="IPR036388">
    <property type="entry name" value="WH-like_DNA-bd_sf"/>
</dbReference>
<dbReference type="InterPro" id="IPR036390">
    <property type="entry name" value="WH_DNA-bd_sf"/>
</dbReference>
<dbReference type="PANTHER" id="PTHR11849:SF191">
    <property type="entry name" value="ECDYSONE-INDUCED PROTEIN 74EF ISOFORM B"/>
    <property type="match status" value="1"/>
</dbReference>
<dbReference type="PANTHER" id="PTHR11849">
    <property type="entry name" value="ETS"/>
    <property type="match status" value="1"/>
</dbReference>
<dbReference type="Pfam" id="PF00178">
    <property type="entry name" value="Ets"/>
    <property type="match status" value="1"/>
</dbReference>
<dbReference type="PRINTS" id="PR00454">
    <property type="entry name" value="ETSDOMAIN"/>
</dbReference>
<dbReference type="SMART" id="SM00413">
    <property type="entry name" value="ETS"/>
    <property type="match status" value="1"/>
</dbReference>
<dbReference type="SUPFAM" id="SSF81995">
    <property type="entry name" value="beta-sandwich domain of Sec23/24"/>
    <property type="match status" value="2"/>
</dbReference>
<dbReference type="SUPFAM" id="SSF46785">
    <property type="entry name" value="Winged helix' DNA-binding domain"/>
    <property type="match status" value="1"/>
</dbReference>
<dbReference type="PROSITE" id="PS00345">
    <property type="entry name" value="ETS_DOMAIN_1"/>
    <property type="match status" value="1"/>
</dbReference>
<dbReference type="PROSITE" id="PS00346">
    <property type="entry name" value="ETS_DOMAIN_2"/>
    <property type="match status" value="1"/>
</dbReference>
<dbReference type="PROSITE" id="PS50061">
    <property type="entry name" value="ETS_DOMAIN_3"/>
    <property type="match status" value="1"/>
</dbReference>
<name>E74EF_DROVI</name>
<reference key="1">
    <citation type="journal article" date="1991" name="Genetics">
        <title>Interspecific comparisons of the structure and regulation of the Drosophila ecdysone-inducible gene E74.</title>
        <authorList>
            <person name="Jones C.W."/>
            <person name="Dalton M.W."/>
            <person name="Townley L.H."/>
        </authorList>
    </citation>
    <scope>NUCLEOTIDE SEQUENCE</scope>
    <scope>INDUCTION</scope>
</reference>
<keyword id="KW-0175">Coiled coil</keyword>
<keyword id="KW-0217">Developmental protein</keyword>
<keyword id="KW-0238">DNA-binding</keyword>
<keyword id="KW-0539">Nucleus</keyword>
<keyword id="KW-0804">Transcription</keyword>
<keyword id="KW-0805">Transcription regulation</keyword>
<feature type="chain" id="PRO_0000204084" description="Ecdysone-induced protein 74EF">
    <location>
        <begin position="1"/>
        <end position="873"/>
    </location>
</feature>
<feature type="DNA-binding region" description="ETS" evidence="3">
    <location>
        <begin position="777"/>
        <end position="859"/>
    </location>
</feature>
<feature type="region of interest" description="Disordered" evidence="4">
    <location>
        <begin position="321"/>
        <end position="346"/>
    </location>
</feature>
<feature type="region of interest" description="Disordered" evidence="4">
    <location>
        <begin position="400"/>
        <end position="427"/>
    </location>
</feature>
<feature type="region of interest" description="Disordered" evidence="4">
    <location>
        <begin position="439"/>
        <end position="485"/>
    </location>
</feature>
<feature type="region of interest" description="Disordered" evidence="4">
    <location>
        <begin position="605"/>
        <end position="689"/>
    </location>
</feature>
<feature type="coiled-coil region" evidence="2">
    <location>
        <begin position="45"/>
        <end position="155"/>
    </location>
</feature>
<feature type="coiled-coil region" evidence="2">
    <location>
        <begin position="330"/>
        <end position="426"/>
    </location>
</feature>
<feature type="compositionally biased region" description="Low complexity" evidence="4">
    <location>
        <begin position="330"/>
        <end position="346"/>
    </location>
</feature>
<feature type="compositionally biased region" description="Low complexity" evidence="4">
    <location>
        <begin position="400"/>
        <end position="426"/>
    </location>
</feature>
<feature type="compositionally biased region" description="Low complexity" evidence="4">
    <location>
        <begin position="466"/>
        <end position="480"/>
    </location>
</feature>
<feature type="compositionally biased region" description="Low complexity" evidence="4">
    <location>
        <begin position="621"/>
        <end position="676"/>
    </location>
</feature>
<gene>
    <name type="primary">Eip74EF</name>
    <name type="synonym">e74</name>
</gene>
<sequence>MPFIDDALLWCPDNDGRLVGGLDLATCITDDSTVDAENINPTIGANSSTLQQQQQLQQQQLQQQQLQQQQQQLQQLQQHQQQQQQQQQSADLCGSAARNVNVVVEPLCGSDSSDELFRTLSESNFEIESLLSDLATVEVKVENEENNNNNNSNVISDNDFAASQAAVVAGDDLLAKDNVQLSVQGLVDSVGARSADSGSGNGHGQALLAFGSATATATAASSRMVSFVTCRTTESMQINILFGFRLGFLLPCDLLNNNNNSNNNGSNGNGNGNGRCTPEESRFVTVTSASANPLLVEKLMSKCLNIDKRNDKLDDTEIPIVKQSTSPSPHQQQQQHQHQQQQQQQQQQHLQQTQQQQQQQQQQQQQQQQQQVFGSATTLLHIKTEQNALLTPLQQSQQQQQQQQQQQQQHSLQANNNAHQQQQQQQPLAIPHRPLLHNLLSGGAIHNPHHRNYTTATTGSFPPSPADSGVSDVDSSSSGGQPCADELKARLGMPTTAATSASAAAAAAAATHSAAAAAAAAAAAAAHLHTGTFLHPNLYQNNAANSLRNIWNRSVGVPDNYYGNSGSSSGGGGGGVGGVNPGTPGAPSYLTTSYFNAPAAASSQRSAAANGFGTHQHHSLQHQQQQQQSYAPQQQQQLSHHQQQQQQQQLHHQQQQQQQQQQQQHSQSQLAAAQLASTHPHQLHSTPHDTHSTIANAAAAAAAAAAASVVSSSSGRSGAISVAGSQSVIQQPATSSVNYDLSYMLELGGFQQAKAKKPRKPKLEMGVKRASREGSTTYLWEFLLKLLQDREYCPRFIKWTNREKGVFKLVDSKAVSRLWGMHKNKPDMNYETMGRALRYYYQRGILAKVDGQRLVYQFVDVPKDIVEIDCNGV</sequence>
<protein>
    <recommendedName>
        <fullName>Ecdysone-induced protein 74EF</fullName>
    </recommendedName>
    <alternativeName>
        <fullName>ETS-related protein E74A</fullName>
    </alternativeName>
</protein>